<name>DGTL1_PARL1</name>
<sequence length="396" mass="44472">MPIANPAATAPYATRAEETRGRLFQEPESATRTAFQRDRDRIIHSGAFRRLKYKTQVFVYHEGDNYRTRLSHSLEVSQIARSVARVFGLDEDLSETLALAHDLGHTPFGHAGETALDSCMRDFGGFDHNAQTLRIVTKLEHRYARFDGLNLTWETLEGLVKHNGPVVTPGRSIADLPRAIAEYAETQDLELATYAGPEAQVAALADDIAYNNHDIDDGLRAGLFDIEDLMALPLVGDVFQRVMDRYPGLETTRVIHEAVRELIGTMIEDLLSETRSRLAEARPRSAADVRAMSRPLVGFTAEMTEHNAALKAFLFERMYRHYRVNRSMSKAQRIVRDLFSLLHGEPDQLAPEWQAGCDGPGGIKTARRVCDFIAGMTDKFAIEEHARLFDLHDPRA</sequence>
<comment type="similarity">
    <text evidence="1">Belongs to the dGTPase family. Type 2 subfamily.</text>
</comment>
<organism>
    <name type="scientific">Parvibaculum lavamentivorans (strain DS-1 / DSM 13023 / NCIMB 13966)</name>
    <dbReference type="NCBI Taxonomy" id="402881"/>
    <lineage>
        <taxon>Bacteria</taxon>
        <taxon>Pseudomonadati</taxon>
        <taxon>Pseudomonadota</taxon>
        <taxon>Alphaproteobacteria</taxon>
        <taxon>Hyphomicrobiales</taxon>
        <taxon>Parvibaculaceae</taxon>
        <taxon>Parvibaculum</taxon>
    </lineage>
</organism>
<feature type="chain" id="PRO_1000073116" description="Deoxyguanosinetriphosphate triphosphohydrolase-like protein">
    <location>
        <begin position="1"/>
        <end position="396"/>
    </location>
</feature>
<feature type="domain" description="HD" evidence="2">
    <location>
        <begin position="69"/>
        <end position="211"/>
    </location>
</feature>
<gene>
    <name type="ordered locus">Plav_3021</name>
</gene>
<evidence type="ECO:0000255" key="1">
    <source>
        <dbReference type="HAMAP-Rule" id="MF_01212"/>
    </source>
</evidence>
<evidence type="ECO:0000255" key="2">
    <source>
        <dbReference type="PROSITE-ProRule" id="PRU01175"/>
    </source>
</evidence>
<dbReference type="EMBL" id="CP000774">
    <property type="protein sequence ID" value="ABS64628.1"/>
    <property type="molecule type" value="Genomic_DNA"/>
</dbReference>
<dbReference type="RefSeq" id="WP_012111949.1">
    <property type="nucleotide sequence ID" value="NC_009719.1"/>
</dbReference>
<dbReference type="SMR" id="A7HXJ5"/>
<dbReference type="STRING" id="402881.Plav_3021"/>
<dbReference type="KEGG" id="pla:Plav_3021"/>
<dbReference type="eggNOG" id="COG0232">
    <property type="taxonomic scope" value="Bacteria"/>
</dbReference>
<dbReference type="HOGENOM" id="CLU_028163_1_0_5"/>
<dbReference type="OrthoDB" id="9803619at2"/>
<dbReference type="Proteomes" id="UP000006377">
    <property type="component" value="Chromosome"/>
</dbReference>
<dbReference type="GO" id="GO:0008832">
    <property type="term" value="F:dGTPase activity"/>
    <property type="evidence" value="ECO:0007669"/>
    <property type="project" value="TreeGrafter"/>
</dbReference>
<dbReference type="GO" id="GO:0006203">
    <property type="term" value="P:dGTP catabolic process"/>
    <property type="evidence" value="ECO:0007669"/>
    <property type="project" value="TreeGrafter"/>
</dbReference>
<dbReference type="CDD" id="cd00077">
    <property type="entry name" value="HDc"/>
    <property type="match status" value="1"/>
</dbReference>
<dbReference type="Gene3D" id="1.10.3210.10">
    <property type="entry name" value="Hypothetical protein af1432"/>
    <property type="match status" value="1"/>
</dbReference>
<dbReference type="HAMAP" id="MF_01212">
    <property type="entry name" value="dGTPase_type2"/>
    <property type="match status" value="1"/>
</dbReference>
<dbReference type="InterPro" id="IPR006261">
    <property type="entry name" value="dGTPase"/>
</dbReference>
<dbReference type="InterPro" id="IPR050135">
    <property type="entry name" value="dGTPase-like"/>
</dbReference>
<dbReference type="InterPro" id="IPR023023">
    <property type="entry name" value="dNTPase_2"/>
</dbReference>
<dbReference type="InterPro" id="IPR003607">
    <property type="entry name" value="HD/PDEase_dom"/>
</dbReference>
<dbReference type="InterPro" id="IPR006674">
    <property type="entry name" value="HD_domain"/>
</dbReference>
<dbReference type="InterPro" id="IPR026875">
    <property type="entry name" value="PHydrolase_assoc_dom"/>
</dbReference>
<dbReference type="NCBIfam" id="TIGR01353">
    <property type="entry name" value="dGTP_triPase"/>
    <property type="match status" value="1"/>
</dbReference>
<dbReference type="NCBIfam" id="NF002326">
    <property type="entry name" value="PRK01286.1-1"/>
    <property type="match status" value="1"/>
</dbReference>
<dbReference type="NCBIfam" id="NF002328">
    <property type="entry name" value="PRK01286.1-3"/>
    <property type="match status" value="1"/>
</dbReference>
<dbReference type="PANTHER" id="PTHR11373:SF43">
    <property type="entry name" value="DEOXYGUANOSINETRIPHOSPHATE TRIPHOSPHOHYDROLASE-LIKE PROTEIN"/>
    <property type="match status" value="1"/>
</dbReference>
<dbReference type="PANTHER" id="PTHR11373">
    <property type="entry name" value="DEOXYNUCLEOSIDE TRIPHOSPHATE TRIPHOSPHOHYDROLASE"/>
    <property type="match status" value="1"/>
</dbReference>
<dbReference type="Pfam" id="PF01966">
    <property type="entry name" value="HD"/>
    <property type="match status" value="1"/>
</dbReference>
<dbReference type="Pfam" id="PF13286">
    <property type="entry name" value="HD_assoc"/>
    <property type="match status" value="1"/>
</dbReference>
<dbReference type="SMART" id="SM00471">
    <property type="entry name" value="HDc"/>
    <property type="match status" value="1"/>
</dbReference>
<dbReference type="SUPFAM" id="SSF109604">
    <property type="entry name" value="HD-domain/PDEase-like"/>
    <property type="match status" value="1"/>
</dbReference>
<dbReference type="PROSITE" id="PS51831">
    <property type="entry name" value="HD"/>
    <property type="match status" value="1"/>
</dbReference>
<reference key="1">
    <citation type="journal article" date="2011" name="Stand. Genomic Sci.">
        <title>Complete genome sequence of Parvibaculum lavamentivorans type strain (DS-1(T)).</title>
        <authorList>
            <person name="Schleheck D."/>
            <person name="Weiss M."/>
            <person name="Pitluck S."/>
            <person name="Bruce D."/>
            <person name="Land M.L."/>
            <person name="Han S."/>
            <person name="Saunders E."/>
            <person name="Tapia R."/>
            <person name="Detter C."/>
            <person name="Brettin T."/>
            <person name="Han J."/>
            <person name="Woyke T."/>
            <person name="Goodwin L."/>
            <person name="Pennacchio L."/>
            <person name="Nolan M."/>
            <person name="Cook A.M."/>
            <person name="Kjelleberg S."/>
            <person name="Thomas T."/>
        </authorList>
    </citation>
    <scope>NUCLEOTIDE SEQUENCE [LARGE SCALE GENOMIC DNA]</scope>
    <source>
        <strain>DS-1 / DSM 13023 / NCIMB 13966</strain>
    </source>
</reference>
<protein>
    <recommendedName>
        <fullName evidence="1">Deoxyguanosinetriphosphate triphosphohydrolase-like protein</fullName>
    </recommendedName>
</protein>
<proteinExistence type="inferred from homology"/>
<keyword id="KW-0378">Hydrolase</keyword>
<keyword id="KW-1185">Reference proteome</keyword>
<accession>A7HXJ5</accession>